<evidence type="ECO:0000255" key="1">
    <source>
        <dbReference type="HAMAP-Rule" id="MF_00480"/>
    </source>
</evidence>
<evidence type="ECO:0000305" key="2"/>
<name>RS7_SULDN</name>
<feature type="chain" id="PRO_0000241786" description="Small ribosomal subunit protein uS7">
    <location>
        <begin position="1"/>
        <end position="155"/>
    </location>
</feature>
<accession>Q30TP4</accession>
<organism>
    <name type="scientific">Sulfurimonas denitrificans (strain ATCC 33889 / DSM 1251)</name>
    <name type="common">Thiomicrospira denitrificans (strain ATCC 33889 / DSM 1251)</name>
    <dbReference type="NCBI Taxonomy" id="326298"/>
    <lineage>
        <taxon>Bacteria</taxon>
        <taxon>Pseudomonadati</taxon>
        <taxon>Campylobacterota</taxon>
        <taxon>Epsilonproteobacteria</taxon>
        <taxon>Campylobacterales</taxon>
        <taxon>Sulfurimonadaceae</taxon>
        <taxon>Sulfurimonas</taxon>
    </lineage>
</organism>
<keyword id="KW-1185">Reference proteome</keyword>
<keyword id="KW-0687">Ribonucleoprotein</keyword>
<keyword id="KW-0689">Ribosomal protein</keyword>
<keyword id="KW-0694">RNA-binding</keyword>
<keyword id="KW-0699">rRNA-binding</keyword>
<keyword id="KW-0820">tRNA-binding</keyword>
<sequence>MRRRKAPVREIMPDPVYGSKVLTKFINKIMFDGKKSTAEKIIYSAMDIISSRGEKTGIDTFNEAIENIKPIIEVKSRRVGGATYQVPVEVRPVRQLSLAIRWLVDASRKRNERTMAERLANELMDASSDKGNAFKKKEDTYRMAEANKAFAHYRW</sequence>
<reference key="1">
    <citation type="journal article" date="2008" name="Appl. Environ. Microbiol.">
        <title>Genome of the epsilonproteobacterial chemolithoautotroph Sulfurimonas denitrificans.</title>
        <authorList>
            <person name="Sievert S.M."/>
            <person name="Scott K.M."/>
            <person name="Klotz M.G."/>
            <person name="Chain P.S.G."/>
            <person name="Hauser L.J."/>
            <person name="Hemp J."/>
            <person name="Huegler M."/>
            <person name="Land M."/>
            <person name="Lapidus A."/>
            <person name="Larimer F.W."/>
            <person name="Lucas S."/>
            <person name="Malfatti S.A."/>
            <person name="Meyer F."/>
            <person name="Paulsen I.T."/>
            <person name="Ren Q."/>
            <person name="Simon J."/>
            <person name="Bailey K."/>
            <person name="Diaz E."/>
            <person name="Fitzpatrick K.A."/>
            <person name="Glover B."/>
            <person name="Gwatney N."/>
            <person name="Korajkic A."/>
            <person name="Long A."/>
            <person name="Mobberley J.M."/>
            <person name="Pantry S.N."/>
            <person name="Pazder G."/>
            <person name="Peterson S."/>
            <person name="Quintanilla J.D."/>
            <person name="Sprinkle R."/>
            <person name="Stephens J."/>
            <person name="Thomas P."/>
            <person name="Vaughn R."/>
            <person name="Weber M.J."/>
            <person name="Wooten L.L."/>
        </authorList>
    </citation>
    <scope>NUCLEOTIDE SEQUENCE [LARGE SCALE GENOMIC DNA]</scope>
    <source>
        <strain>ATCC 33889 / DSM 1251</strain>
    </source>
</reference>
<dbReference type="EMBL" id="CP000153">
    <property type="protein sequence ID" value="ABB43637.1"/>
    <property type="molecule type" value="Genomic_DNA"/>
</dbReference>
<dbReference type="RefSeq" id="WP_011371991.1">
    <property type="nucleotide sequence ID" value="NC_007575.1"/>
</dbReference>
<dbReference type="SMR" id="Q30TP4"/>
<dbReference type="STRING" id="326298.Suden_0356"/>
<dbReference type="KEGG" id="tdn:Suden_0356"/>
<dbReference type="eggNOG" id="COG0049">
    <property type="taxonomic scope" value="Bacteria"/>
</dbReference>
<dbReference type="HOGENOM" id="CLU_072226_1_1_7"/>
<dbReference type="OrthoDB" id="9807653at2"/>
<dbReference type="Proteomes" id="UP000002714">
    <property type="component" value="Chromosome"/>
</dbReference>
<dbReference type="GO" id="GO:0015935">
    <property type="term" value="C:small ribosomal subunit"/>
    <property type="evidence" value="ECO:0007669"/>
    <property type="project" value="InterPro"/>
</dbReference>
<dbReference type="GO" id="GO:0019843">
    <property type="term" value="F:rRNA binding"/>
    <property type="evidence" value="ECO:0007669"/>
    <property type="project" value="UniProtKB-UniRule"/>
</dbReference>
<dbReference type="GO" id="GO:0003735">
    <property type="term" value="F:structural constituent of ribosome"/>
    <property type="evidence" value="ECO:0007669"/>
    <property type="project" value="InterPro"/>
</dbReference>
<dbReference type="GO" id="GO:0000049">
    <property type="term" value="F:tRNA binding"/>
    <property type="evidence" value="ECO:0007669"/>
    <property type="project" value="UniProtKB-UniRule"/>
</dbReference>
<dbReference type="GO" id="GO:0006412">
    <property type="term" value="P:translation"/>
    <property type="evidence" value="ECO:0007669"/>
    <property type="project" value="UniProtKB-UniRule"/>
</dbReference>
<dbReference type="CDD" id="cd14869">
    <property type="entry name" value="uS7_Bacteria"/>
    <property type="match status" value="1"/>
</dbReference>
<dbReference type="FunFam" id="1.10.455.10:FF:000001">
    <property type="entry name" value="30S ribosomal protein S7"/>
    <property type="match status" value="1"/>
</dbReference>
<dbReference type="Gene3D" id="1.10.455.10">
    <property type="entry name" value="Ribosomal protein S7 domain"/>
    <property type="match status" value="1"/>
</dbReference>
<dbReference type="HAMAP" id="MF_00480_B">
    <property type="entry name" value="Ribosomal_uS7_B"/>
    <property type="match status" value="1"/>
</dbReference>
<dbReference type="InterPro" id="IPR000235">
    <property type="entry name" value="Ribosomal_uS7"/>
</dbReference>
<dbReference type="InterPro" id="IPR005717">
    <property type="entry name" value="Ribosomal_uS7_bac/org-type"/>
</dbReference>
<dbReference type="InterPro" id="IPR020606">
    <property type="entry name" value="Ribosomal_uS7_CS"/>
</dbReference>
<dbReference type="InterPro" id="IPR023798">
    <property type="entry name" value="Ribosomal_uS7_dom"/>
</dbReference>
<dbReference type="InterPro" id="IPR036823">
    <property type="entry name" value="Ribosomal_uS7_dom_sf"/>
</dbReference>
<dbReference type="NCBIfam" id="TIGR01029">
    <property type="entry name" value="rpsG_bact"/>
    <property type="match status" value="1"/>
</dbReference>
<dbReference type="PANTHER" id="PTHR11205">
    <property type="entry name" value="RIBOSOMAL PROTEIN S7"/>
    <property type="match status" value="1"/>
</dbReference>
<dbReference type="Pfam" id="PF00177">
    <property type="entry name" value="Ribosomal_S7"/>
    <property type="match status" value="1"/>
</dbReference>
<dbReference type="PIRSF" id="PIRSF002122">
    <property type="entry name" value="RPS7p_RPS7a_RPS5e_RPS7o"/>
    <property type="match status" value="1"/>
</dbReference>
<dbReference type="SUPFAM" id="SSF47973">
    <property type="entry name" value="Ribosomal protein S7"/>
    <property type="match status" value="1"/>
</dbReference>
<dbReference type="PROSITE" id="PS00052">
    <property type="entry name" value="RIBOSOMAL_S7"/>
    <property type="match status" value="1"/>
</dbReference>
<comment type="function">
    <text evidence="1">One of the primary rRNA binding proteins, it binds directly to 16S rRNA where it nucleates assembly of the head domain of the 30S subunit. Is located at the subunit interface close to the decoding center, probably blocks exit of the E-site tRNA.</text>
</comment>
<comment type="subunit">
    <text evidence="1">Part of the 30S ribosomal subunit. Contacts proteins S9 and S11.</text>
</comment>
<comment type="similarity">
    <text evidence="1">Belongs to the universal ribosomal protein uS7 family.</text>
</comment>
<gene>
    <name evidence="1" type="primary">rpsG</name>
    <name type="ordered locus">Suden_0356</name>
</gene>
<proteinExistence type="inferred from homology"/>
<protein>
    <recommendedName>
        <fullName evidence="1">Small ribosomal subunit protein uS7</fullName>
    </recommendedName>
    <alternativeName>
        <fullName evidence="2">30S ribosomal protein S7</fullName>
    </alternativeName>
</protein>